<protein>
    <recommendedName>
        <fullName>Autophagy-related protein 17</fullName>
    </recommendedName>
</protein>
<accession>Q0CY33</accession>
<comment type="function">
    <text evidence="1">Autophagy-specific protein that functions in response to autophagy-inducing signals as a scaffold to recruit other ATG proteins to organize pre-autophagosomal structure (PAS) formation. Modulates the timing and magnitude of the autophagy response, such as the size of the sequestering vesicles. Plays particularly a role in pexophagy and nucleophagy (By similarity).</text>
</comment>
<comment type="subcellular location">
    <subcellularLocation>
        <location evidence="1">Cytoplasm</location>
    </subcellularLocation>
    <subcellularLocation>
        <location evidence="1">Preautophagosomal structure membrane</location>
        <topology evidence="1">Peripheral membrane protein</topology>
    </subcellularLocation>
</comment>
<comment type="similarity">
    <text evidence="4">Belongs to the ATG17 family.</text>
</comment>
<proteinExistence type="inferred from homology"/>
<evidence type="ECO:0000250" key="1"/>
<evidence type="ECO:0000255" key="2"/>
<evidence type="ECO:0000256" key="3">
    <source>
        <dbReference type="SAM" id="MobiDB-lite"/>
    </source>
</evidence>
<evidence type="ECO:0000305" key="4"/>
<name>ATG17_ASPTN</name>
<sequence>MSASESSATSSVAPHDHGSSQVETSIPQLETLISHLVAAKRSLSSINHVWRANEIVTSARSALEESVVVSARTGFLRKGLNNQLRLLYSVRAEVEEVSVRGRSEFAGVLRSLDAADARLRKTLNLLRETIVHASFRPEGEEPKSLHDFVDERGVEELNSALKSAIDRTNAAQTELETSNCAFDDELQSIKEALGNYRAVTKMASSRTSASSSSSSASNASLPSMSGVPSMLHSLEMHAQEMANLLESLVRHFDLCVTAVKHTEGGGAAARSITGDMPAGMNVSGRGGPNIEEGINANLNAPLDPLSNSEYREMVNVLIKDAAEAEDVVMEIQDRIGEMESIYENILGQRDAVLAVYNATTSVFEHISSLASARLAGYIAQAHTFTRVWNDEHEHIQGGLSDLSDLNTLYDGFLEAYDGLILEVARRRHVRQRVEKVLRDAKHKLDQLYEEDVNARETFRVEQGDYLPSDIWPGIGREPMRIEFRRISGGTLKGVQDQHPDEDTAPPSDPKDVANHTTDENRDEGETIPALPKALVEEALARLKARNRQAT</sequence>
<dbReference type="EMBL" id="CH476595">
    <property type="protein sequence ID" value="EAU38158.1"/>
    <property type="molecule type" value="Genomic_DNA"/>
</dbReference>
<dbReference type="RefSeq" id="XP_001208766.1">
    <property type="nucleotide sequence ID" value="XM_001208766.1"/>
</dbReference>
<dbReference type="SMR" id="Q0CY33"/>
<dbReference type="STRING" id="341663.Q0CY33"/>
<dbReference type="EnsemblFungi" id="EAU38158">
    <property type="protein sequence ID" value="EAU38158"/>
    <property type="gene ID" value="ATEG_01401"/>
</dbReference>
<dbReference type="GeneID" id="4316260"/>
<dbReference type="VEuPathDB" id="FungiDB:ATEG_01401"/>
<dbReference type="eggNOG" id="ENOG502RYHP">
    <property type="taxonomic scope" value="Eukaryota"/>
</dbReference>
<dbReference type="HOGENOM" id="CLU_028356_0_0_1"/>
<dbReference type="OMA" id="THVWRAN"/>
<dbReference type="OrthoDB" id="1937984at2759"/>
<dbReference type="Proteomes" id="UP000007963">
    <property type="component" value="Unassembled WGS sequence"/>
</dbReference>
<dbReference type="GO" id="GO:1990316">
    <property type="term" value="C:Atg1/ULK1 kinase complex"/>
    <property type="evidence" value="ECO:0007669"/>
    <property type="project" value="TreeGrafter"/>
</dbReference>
<dbReference type="GO" id="GO:0034045">
    <property type="term" value="C:phagophore assembly site membrane"/>
    <property type="evidence" value="ECO:0007669"/>
    <property type="project" value="UniProtKB-SubCell"/>
</dbReference>
<dbReference type="GO" id="GO:0060090">
    <property type="term" value="F:molecular adaptor activity"/>
    <property type="evidence" value="ECO:0007669"/>
    <property type="project" value="TreeGrafter"/>
</dbReference>
<dbReference type="GO" id="GO:0030295">
    <property type="term" value="F:protein kinase activator activity"/>
    <property type="evidence" value="ECO:0007669"/>
    <property type="project" value="TreeGrafter"/>
</dbReference>
<dbReference type="GO" id="GO:0000045">
    <property type="term" value="P:autophagosome assembly"/>
    <property type="evidence" value="ECO:0007669"/>
    <property type="project" value="TreeGrafter"/>
</dbReference>
<dbReference type="GO" id="GO:0000422">
    <property type="term" value="P:autophagy of mitochondrion"/>
    <property type="evidence" value="ECO:0007669"/>
    <property type="project" value="TreeGrafter"/>
</dbReference>
<dbReference type="GO" id="GO:0034727">
    <property type="term" value="P:piecemeal microautophagy of the nucleus"/>
    <property type="evidence" value="ECO:0007669"/>
    <property type="project" value="TreeGrafter"/>
</dbReference>
<dbReference type="InterPro" id="IPR007240">
    <property type="entry name" value="Atg17"/>
</dbReference>
<dbReference type="InterPro" id="IPR045326">
    <property type="entry name" value="ATG17-like_dom"/>
</dbReference>
<dbReference type="PANTHER" id="PTHR28005">
    <property type="entry name" value="AUTOPHAGY-RELATED PROTEIN 17"/>
    <property type="match status" value="1"/>
</dbReference>
<dbReference type="PANTHER" id="PTHR28005:SF1">
    <property type="entry name" value="AUTOPHAGY-RELATED PROTEIN 17"/>
    <property type="match status" value="1"/>
</dbReference>
<dbReference type="Pfam" id="PF04108">
    <property type="entry name" value="ATG17_like"/>
    <property type="match status" value="1"/>
</dbReference>
<feature type="chain" id="PRO_0000317982" description="Autophagy-related protein 17">
    <location>
        <begin position="1"/>
        <end position="550"/>
    </location>
</feature>
<feature type="region of interest" description="Disordered" evidence="3">
    <location>
        <begin position="1"/>
        <end position="23"/>
    </location>
</feature>
<feature type="region of interest" description="Disordered" evidence="3">
    <location>
        <begin position="205"/>
        <end position="224"/>
    </location>
</feature>
<feature type="region of interest" description="Disordered" evidence="3">
    <location>
        <begin position="491"/>
        <end position="531"/>
    </location>
</feature>
<feature type="coiled-coil region" evidence="2">
    <location>
        <begin position="315"/>
        <end position="344"/>
    </location>
</feature>
<feature type="coiled-coil region" evidence="2">
    <location>
        <begin position="427"/>
        <end position="457"/>
    </location>
</feature>
<feature type="compositionally biased region" description="Low complexity" evidence="3">
    <location>
        <begin position="1"/>
        <end position="13"/>
    </location>
</feature>
<feature type="compositionally biased region" description="Basic and acidic residues" evidence="3">
    <location>
        <begin position="508"/>
        <end position="519"/>
    </location>
</feature>
<gene>
    <name type="primary">atg17</name>
    <name type="ORF">ATEG_01401</name>
</gene>
<organism>
    <name type="scientific">Aspergillus terreus (strain NIH 2624 / FGSC A1156)</name>
    <dbReference type="NCBI Taxonomy" id="341663"/>
    <lineage>
        <taxon>Eukaryota</taxon>
        <taxon>Fungi</taxon>
        <taxon>Dikarya</taxon>
        <taxon>Ascomycota</taxon>
        <taxon>Pezizomycotina</taxon>
        <taxon>Eurotiomycetes</taxon>
        <taxon>Eurotiomycetidae</taxon>
        <taxon>Eurotiales</taxon>
        <taxon>Aspergillaceae</taxon>
        <taxon>Aspergillus</taxon>
        <taxon>Aspergillus subgen. Circumdati</taxon>
    </lineage>
</organism>
<reference key="1">
    <citation type="submission" date="2005-09" db="EMBL/GenBank/DDBJ databases">
        <title>Annotation of the Aspergillus terreus NIH2624 genome.</title>
        <authorList>
            <person name="Birren B.W."/>
            <person name="Lander E.S."/>
            <person name="Galagan J.E."/>
            <person name="Nusbaum C."/>
            <person name="Devon K."/>
            <person name="Henn M."/>
            <person name="Ma L.-J."/>
            <person name="Jaffe D.B."/>
            <person name="Butler J."/>
            <person name="Alvarez P."/>
            <person name="Gnerre S."/>
            <person name="Grabherr M."/>
            <person name="Kleber M."/>
            <person name="Mauceli E.W."/>
            <person name="Brockman W."/>
            <person name="Rounsley S."/>
            <person name="Young S.K."/>
            <person name="LaButti K."/>
            <person name="Pushparaj V."/>
            <person name="DeCaprio D."/>
            <person name="Crawford M."/>
            <person name="Koehrsen M."/>
            <person name="Engels R."/>
            <person name="Montgomery P."/>
            <person name="Pearson M."/>
            <person name="Howarth C."/>
            <person name="Larson L."/>
            <person name="Luoma S."/>
            <person name="White J."/>
            <person name="Alvarado L."/>
            <person name="Kodira C.D."/>
            <person name="Zeng Q."/>
            <person name="Oleary S."/>
            <person name="Yandava C."/>
            <person name="Denning D.W."/>
            <person name="Nierman W.C."/>
            <person name="Milne T."/>
            <person name="Madden K."/>
        </authorList>
    </citation>
    <scope>NUCLEOTIDE SEQUENCE [LARGE SCALE GENOMIC DNA]</scope>
    <source>
        <strain>NIH 2624 / FGSC A1156</strain>
    </source>
</reference>
<keyword id="KW-0072">Autophagy</keyword>
<keyword id="KW-0175">Coiled coil</keyword>
<keyword id="KW-0963">Cytoplasm</keyword>
<keyword id="KW-0472">Membrane</keyword>
<keyword id="KW-1185">Reference proteome</keyword>